<sequence>MMLPSPVTSTPFSVKDILNLEQQRHFHGAHLQAELEQHFHSAPCMLATAEGTQFSDAGEEDEEEEGEKLSYLNSLAAAEGHGDSGLCPQSYVHTVLRDACSGPKEQEEEVVSERSQKSCQLKKSLEAAGDCKTSEDGERPKPRSRRKPRVLFSQAQVFELERRFKQQRYLSAPEREHLASSLKLTSTQVKIWFQNRRYKCKRQRQDKSLELGTHAPPPPPRRVAVPVLVRDGKPCVTPSAQTYGSPYGVGAGAYSYNSFPAYGYGNSAAAAAAAAAAAAAAAAYSGSYGCAYPTGGGGGGGGTASAATTAMQPACSATGGGSFVNVSNLGGFGSGGGAQPLHQGAAAGSACTQGTLQGIRAW</sequence>
<proteinExistence type="evidence at transcript level"/>
<name>NKX23_MOUSE</name>
<evidence type="ECO:0000255" key="1">
    <source>
        <dbReference type="PROSITE-ProRule" id="PRU00108"/>
    </source>
</evidence>
<evidence type="ECO:0000256" key="2">
    <source>
        <dbReference type="SAM" id="MobiDB-lite"/>
    </source>
</evidence>
<evidence type="ECO:0000269" key="3">
    <source>
    </source>
</evidence>
<evidence type="ECO:0000269" key="4">
    <source>
    </source>
</evidence>
<evidence type="ECO:0000305" key="5"/>
<feature type="chain" id="PRO_0000048934" description="Homeobox protein Nkx-2.3">
    <location>
        <begin position="1"/>
        <end position="362"/>
    </location>
</feature>
<feature type="DNA-binding region" description="Homeobox" evidence="1">
    <location>
        <begin position="145"/>
        <end position="204"/>
    </location>
</feature>
<feature type="region of interest" description="Disordered" evidence="2">
    <location>
        <begin position="126"/>
        <end position="149"/>
    </location>
</feature>
<feature type="region of interest" description="Disordered" evidence="2">
    <location>
        <begin position="203"/>
        <end position="222"/>
    </location>
</feature>
<feature type="compositionally biased region" description="Basic and acidic residues" evidence="2">
    <location>
        <begin position="132"/>
        <end position="141"/>
    </location>
</feature>
<feature type="sequence conflict" description="In Ref. 1; CAA72002." evidence="5" ref="1">
    <original>C</original>
    <variation>R</variation>
    <location>
        <position position="44"/>
    </location>
</feature>
<feature type="sequence conflict" description="In Ref. 1; CAA72002." evidence="5" ref="1">
    <original>D</original>
    <variation>E</variation>
    <location>
        <position position="61"/>
    </location>
</feature>
<feature type="sequence conflict" description="In Ref. 1; CAA72002." evidence="5" ref="1">
    <original>K</original>
    <variation>R</variation>
    <location>
        <position position="132"/>
    </location>
</feature>
<feature type="sequence conflict" description="In Ref. 1; CAA72002." evidence="5" ref="1">
    <original>GVG</original>
    <variation>RC</variation>
    <location>
        <begin position="248"/>
        <end position="250"/>
    </location>
</feature>
<feature type="sequence conflict" description="In Ref. 1; CAA72002." evidence="5" ref="1">
    <original>AYGYGNSAAAAAAAAAAAAAAAAYSGSYGCAYPTGGGGGGGGTASAATTAMQPACSATGGGSFVNVSNLGGFGSGGGAQPLHQGAAAGSACTQGTLQ</original>
    <variation>TATGTRPPQPLQPPQPQQQGLQRQLRLAYRPVAAVVVAARPPRRPPPCNPPAAPPGDLRVTAGIEAFVPLVR</variation>
    <location>
        <begin position="261"/>
        <end position="357"/>
    </location>
</feature>
<feature type="sequence conflict" description="In Ref. 3; AAD38415." evidence="5" ref="3">
    <original>S</original>
    <variation>A</variation>
    <location>
        <position position="349"/>
    </location>
</feature>
<reference key="1">
    <citation type="journal article" date="1997" name="Dev. Dyn.">
        <title>The mouse Nkx2-3 homeodomain gene is expressed in gut mesenchyme during pre- and postnatal mouse development.</title>
        <authorList>
            <person name="Pabst O."/>
            <person name="Schneider A."/>
            <person name="Brand T."/>
            <person name="Arnold H.-H."/>
        </authorList>
    </citation>
    <scope>NUCLEOTIDE SEQUENCE [MRNA]</scope>
    <source>
        <strain>129</strain>
        <tissue>Liver</tissue>
    </source>
</reference>
<reference key="2">
    <citation type="submission" date="1999-11" db="EMBL/GenBank/DDBJ databases">
        <title>Homeodomain factor Nkx2-3 is required for normal development of the gut-associated lymphoid tissue and the spleen.</title>
        <authorList>
            <person name="Wang C.-C."/>
            <person name="Biben C."/>
            <person name="Robb R."/>
            <person name="Tarlinton D."/>
            <person name="Nassir F."/>
            <person name="Davidson N.O."/>
            <person name="Harvey R.P."/>
        </authorList>
    </citation>
    <scope>NUCLEOTIDE SEQUENCE</scope>
    <source>
        <strain>129</strain>
    </source>
</reference>
<reference key="3">
    <citation type="journal article" date="2000" name="Dev. Biol.">
        <title>Homeodomain factor Nkx2-3 controls regional expression of leukocyte homing coreceptor MAdCAM-1 in specialized endothelial cells of the viscera.</title>
        <authorList>
            <person name="Wang C.-C."/>
            <person name="Biben C."/>
            <person name="Robb L."/>
            <person name="Nassir F."/>
            <person name="Barnett L."/>
            <person name="Davidson N.O."/>
            <person name="Koentgen F."/>
            <person name="Tarlinton D."/>
            <person name="Harvey R.P."/>
        </authorList>
    </citation>
    <scope>NUCLEOTIDE SEQUENCE [GENOMIC DNA]</scope>
    <source>
        <strain>BALB/cJ</strain>
    </source>
</reference>
<reference key="4">
    <citation type="journal article" date="2004" name="Genome Res.">
        <title>The status, quality, and expansion of the NIH full-length cDNA project: the Mammalian Gene Collection (MGC).</title>
        <authorList>
            <consortium name="The MGC Project Team"/>
        </authorList>
    </citation>
    <scope>NUCLEOTIDE SEQUENCE [LARGE SCALE MRNA]</scope>
    <source>
        <strain>C57BL/6J</strain>
        <tissue>Brain</tissue>
    </source>
</reference>
<reference key="5">
    <citation type="journal article" date="2000" name="EMBO J.">
        <title>NKX2.3 is required for MAdCAM-1 expression and homing of lymphocytes in spleen and mucosa-associated lymphoid tissue.</title>
        <authorList>
            <person name="Pabst O."/>
            <person name="Foerster R."/>
            <person name="Lipp M."/>
            <person name="Engel H."/>
            <person name="Arnold H.-H."/>
        </authorList>
    </citation>
    <scope>FUNCTION</scope>
</reference>
<reference key="6">
    <citation type="journal article" date="2002" name="Int. J. Dev. Biol.">
        <title>NK-2 class homeobox genes and pharyngeal/oral patterning: Nkx2-3 is required for salivary gland and tooth morphogenesis.</title>
        <authorList>
            <person name="Biben C."/>
            <person name="Wang C.-C."/>
            <person name="Harvey R.P."/>
        </authorList>
    </citation>
    <scope>TISSUE SPECIFICITY</scope>
</reference>
<dbReference type="EMBL" id="Y11117">
    <property type="protein sequence ID" value="CAA72002.1"/>
    <property type="molecule type" value="mRNA"/>
</dbReference>
<dbReference type="EMBL" id="AF202036">
    <property type="protein sequence ID" value="AAF08008.1"/>
    <property type="molecule type" value="mRNA"/>
</dbReference>
<dbReference type="EMBL" id="AF155583">
    <property type="protein sequence ID" value="AAD38415.1"/>
    <property type="molecule type" value="Genomic_DNA"/>
</dbReference>
<dbReference type="EMBL" id="BC072614">
    <property type="protein sequence ID" value="AAH72614.1"/>
    <property type="molecule type" value="mRNA"/>
</dbReference>
<dbReference type="CCDS" id="CCDS29833.1"/>
<dbReference type="RefSeq" id="NP_032725.1">
    <property type="nucleotide sequence ID" value="NM_008699.2"/>
</dbReference>
<dbReference type="SMR" id="P97334"/>
<dbReference type="BioGRID" id="201777">
    <property type="interactions" value="2"/>
</dbReference>
<dbReference type="FunCoup" id="P97334">
    <property type="interactions" value="857"/>
</dbReference>
<dbReference type="IntAct" id="P97334">
    <property type="interactions" value="2"/>
</dbReference>
<dbReference type="STRING" id="10090.ENSMUSP00000050933"/>
<dbReference type="GlyGen" id="P97334">
    <property type="glycosylation" value="1 site"/>
</dbReference>
<dbReference type="iPTMnet" id="P97334"/>
<dbReference type="PhosphoSitePlus" id="P97334"/>
<dbReference type="PaxDb" id="10090-ENSMUSP00000050933"/>
<dbReference type="ProteomicsDB" id="293571"/>
<dbReference type="Antibodypedia" id="31083">
    <property type="antibodies" value="86 antibodies from 24 providers"/>
</dbReference>
<dbReference type="DNASU" id="18089"/>
<dbReference type="Ensembl" id="ENSMUST00000057178.11">
    <property type="protein sequence ID" value="ENSMUSP00000050933.10"/>
    <property type="gene ID" value="ENSMUSG00000044220.14"/>
</dbReference>
<dbReference type="GeneID" id="18089"/>
<dbReference type="KEGG" id="mmu:18089"/>
<dbReference type="UCSC" id="uc008hok.1">
    <property type="organism name" value="mouse"/>
</dbReference>
<dbReference type="AGR" id="MGI:97348"/>
<dbReference type="CTD" id="159296"/>
<dbReference type="MGI" id="MGI:97348">
    <property type="gene designation" value="Nkx2-3"/>
</dbReference>
<dbReference type="VEuPathDB" id="HostDB:ENSMUSG00000044220"/>
<dbReference type="eggNOG" id="KOG0842">
    <property type="taxonomic scope" value="Eukaryota"/>
</dbReference>
<dbReference type="GeneTree" id="ENSGT00940000157556"/>
<dbReference type="HOGENOM" id="CLU_049543_0_0_1"/>
<dbReference type="InParanoid" id="P97334"/>
<dbReference type="OMA" id="QKSCPLK"/>
<dbReference type="OrthoDB" id="87778at9989"/>
<dbReference type="PhylomeDB" id="P97334"/>
<dbReference type="TreeFam" id="TF351204"/>
<dbReference type="BioGRID-ORCS" id="18089">
    <property type="hits" value="1 hit in 79 CRISPR screens"/>
</dbReference>
<dbReference type="ChiTaRS" id="Nkx2-3">
    <property type="organism name" value="mouse"/>
</dbReference>
<dbReference type="PRO" id="PR:P97334"/>
<dbReference type="Proteomes" id="UP000000589">
    <property type="component" value="Chromosome 19"/>
</dbReference>
<dbReference type="RNAct" id="P97334">
    <property type="molecule type" value="protein"/>
</dbReference>
<dbReference type="Bgee" id="ENSMUSG00000044220">
    <property type="expression patterns" value="Expressed in hindgut and 49 other cell types or tissues"/>
</dbReference>
<dbReference type="GO" id="GO:0005634">
    <property type="term" value="C:nucleus"/>
    <property type="evidence" value="ECO:0007669"/>
    <property type="project" value="UniProtKB-SubCell"/>
</dbReference>
<dbReference type="GO" id="GO:0000981">
    <property type="term" value="F:DNA-binding transcription factor activity, RNA polymerase II-specific"/>
    <property type="evidence" value="ECO:0007669"/>
    <property type="project" value="InterPro"/>
</dbReference>
<dbReference type="GO" id="GO:1990837">
    <property type="term" value="F:sequence-specific double-stranded DNA binding"/>
    <property type="evidence" value="ECO:0007669"/>
    <property type="project" value="Ensembl"/>
</dbReference>
<dbReference type="GO" id="GO:0030183">
    <property type="term" value="P:B cell differentiation"/>
    <property type="evidence" value="ECO:0000315"/>
    <property type="project" value="MGI"/>
</dbReference>
<dbReference type="GO" id="GO:0043367">
    <property type="term" value="P:CD4-positive, alpha-beta T cell differentiation"/>
    <property type="evidence" value="ECO:0000315"/>
    <property type="project" value="MGI"/>
</dbReference>
<dbReference type="GO" id="GO:0001708">
    <property type="term" value="P:cell fate specification"/>
    <property type="evidence" value="ECO:0000315"/>
    <property type="project" value="MGI"/>
</dbReference>
<dbReference type="GO" id="GO:0048565">
    <property type="term" value="P:digestive tract development"/>
    <property type="evidence" value="ECO:0000315"/>
    <property type="project" value="MGI"/>
</dbReference>
<dbReference type="GO" id="GO:0010467">
    <property type="term" value="P:gene expression"/>
    <property type="evidence" value="ECO:0000315"/>
    <property type="project" value="MGI"/>
</dbReference>
<dbReference type="GO" id="GO:0022612">
    <property type="term" value="P:gland morphogenesis"/>
    <property type="evidence" value="ECO:0000315"/>
    <property type="project" value="MGI"/>
</dbReference>
<dbReference type="GO" id="GO:0006955">
    <property type="term" value="P:immune response"/>
    <property type="evidence" value="ECO:0000315"/>
    <property type="project" value="MGI"/>
</dbReference>
<dbReference type="GO" id="GO:0001776">
    <property type="term" value="P:leukocyte homeostasis"/>
    <property type="evidence" value="ECO:0000315"/>
    <property type="project" value="MGI"/>
</dbReference>
<dbReference type="GO" id="GO:0050900">
    <property type="term" value="P:leukocyte migration"/>
    <property type="evidence" value="ECO:0000315"/>
    <property type="project" value="MGI"/>
</dbReference>
<dbReference type="GO" id="GO:0048535">
    <property type="term" value="P:lymph node development"/>
    <property type="evidence" value="ECO:0000315"/>
    <property type="project" value="MGI"/>
</dbReference>
<dbReference type="GO" id="GO:0030225">
    <property type="term" value="P:macrophage differentiation"/>
    <property type="evidence" value="ECO:0000315"/>
    <property type="project" value="MGI"/>
</dbReference>
<dbReference type="GO" id="GO:0048537">
    <property type="term" value="P:mucosa-associated lymphoid tissue development"/>
    <property type="evidence" value="ECO:0000315"/>
    <property type="project" value="MGI"/>
</dbReference>
<dbReference type="GO" id="GO:0042475">
    <property type="term" value="P:odontogenesis of dentin-containing tooth"/>
    <property type="evidence" value="ECO:0000315"/>
    <property type="project" value="MGI"/>
</dbReference>
<dbReference type="GO" id="GO:0048541">
    <property type="term" value="P:Peyer's patch development"/>
    <property type="evidence" value="ECO:0000315"/>
    <property type="project" value="MGI"/>
</dbReference>
<dbReference type="GO" id="GO:0002317">
    <property type="term" value="P:plasma cell differentiation"/>
    <property type="evidence" value="ECO:0000315"/>
    <property type="project" value="MGI"/>
</dbReference>
<dbReference type="GO" id="GO:0045944">
    <property type="term" value="P:positive regulation of transcription by RNA polymerase II"/>
    <property type="evidence" value="ECO:0000314"/>
    <property type="project" value="MGI"/>
</dbReference>
<dbReference type="GO" id="GO:0009791">
    <property type="term" value="P:post-embryonic development"/>
    <property type="evidence" value="ECO:0000315"/>
    <property type="project" value="MGI"/>
</dbReference>
<dbReference type="GO" id="GO:0048621">
    <property type="term" value="P:post-embryonic digestive tract morphogenesis"/>
    <property type="evidence" value="ECO:0000315"/>
    <property type="project" value="MGI"/>
</dbReference>
<dbReference type="GO" id="GO:0050678">
    <property type="term" value="P:regulation of epithelial cell proliferation"/>
    <property type="evidence" value="ECO:0000315"/>
    <property type="project" value="MGI"/>
</dbReference>
<dbReference type="GO" id="GO:0046541">
    <property type="term" value="P:saliva secretion"/>
    <property type="evidence" value="ECO:0000315"/>
    <property type="project" value="MGI"/>
</dbReference>
<dbReference type="GO" id="GO:0048536">
    <property type="term" value="P:spleen development"/>
    <property type="evidence" value="ECO:0000315"/>
    <property type="project" value="MGI"/>
</dbReference>
<dbReference type="GO" id="GO:0006366">
    <property type="term" value="P:transcription by RNA polymerase II"/>
    <property type="evidence" value="ECO:0000315"/>
    <property type="project" value="MGI"/>
</dbReference>
<dbReference type="GO" id="GO:0006641">
    <property type="term" value="P:triglyceride metabolic process"/>
    <property type="evidence" value="ECO:0000315"/>
    <property type="project" value="MGI"/>
</dbReference>
<dbReference type="CDD" id="cd00086">
    <property type="entry name" value="homeodomain"/>
    <property type="match status" value="1"/>
</dbReference>
<dbReference type="FunFam" id="1.10.10.60:FF:000078">
    <property type="entry name" value="NK2 homeobox 3"/>
    <property type="match status" value="1"/>
</dbReference>
<dbReference type="Gene3D" id="1.10.10.60">
    <property type="entry name" value="Homeodomain-like"/>
    <property type="match status" value="1"/>
</dbReference>
<dbReference type="InterPro" id="IPR001356">
    <property type="entry name" value="HD"/>
</dbReference>
<dbReference type="InterPro" id="IPR020479">
    <property type="entry name" value="HD_metazoa"/>
</dbReference>
<dbReference type="InterPro" id="IPR017970">
    <property type="entry name" value="Homeobox_CS"/>
</dbReference>
<dbReference type="InterPro" id="IPR050394">
    <property type="entry name" value="Homeobox_NK-like"/>
</dbReference>
<dbReference type="InterPro" id="IPR009057">
    <property type="entry name" value="Homeodomain-like_sf"/>
</dbReference>
<dbReference type="PANTHER" id="PTHR24340">
    <property type="entry name" value="HOMEOBOX PROTEIN NKX"/>
    <property type="match status" value="1"/>
</dbReference>
<dbReference type="PANTHER" id="PTHR24340:SF32">
    <property type="entry name" value="HOMEOBOX PROTEIN NKX-2.3"/>
    <property type="match status" value="1"/>
</dbReference>
<dbReference type="Pfam" id="PF00046">
    <property type="entry name" value="Homeodomain"/>
    <property type="match status" value="1"/>
</dbReference>
<dbReference type="PRINTS" id="PR00024">
    <property type="entry name" value="HOMEOBOX"/>
</dbReference>
<dbReference type="SMART" id="SM00389">
    <property type="entry name" value="HOX"/>
    <property type="match status" value="1"/>
</dbReference>
<dbReference type="SUPFAM" id="SSF46689">
    <property type="entry name" value="Homeodomain-like"/>
    <property type="match status" value="1"/>
</dbReference>
<dbReference type="PROSITE" id="PS00027">
    <property type="entry name" value="HOMEOBOX_1"/>
    <property type="match status" value="1"/>
</dbReference>
<dbReference type="PROSITE" id="PS50071">
    <property type="entry name" value="HOMEOBOX_2"/>
    <property type="match status" value="1"/>
</dbReference>
<keyword id="KW-0217">Developmental protein</keyword>
<keyword id="KW-0238">DNA-binding</keyword>
<keyword id="KW-0371">Homeobox</keyword>
<keyword id="KW-0539">Nucleus</keyword>
<keyword id="KW-1185">Reference proteome</keyword>
<keyword id="KW-0804">Transcription</keyword>
<keyword id="KW-0805">Transcription regulation</keyword>
<comment type="function">
    <text evidence="3">Transcriptional regulator essential for normal development and functions of the small intestine and spleen. Activates directly MADCAM1 expression. Required for homing of lymphocytes in spleen and mucosa-associated lymphoid tissue. May have a role during pharyngeal organogenesis.</text>
</comment>
<comment type="subcellular location">
    <subcellularLocation>
        <location evidence="5">Nucleus</location>
    </subcellularLocation>
</comment>
<comment type="tissue specificity">
    <text evidence="4">Expressed in spleen and intestine. Also expressed in salivary gland and tongue.</text>
</comment>
<comment type="developmental stage">
    <text>Expressed in gut mesenchyme during pre- and postnatal development. Expressed as well in the pharyngeal floor and pouches, and in the oral and branchial arch ectoderm. Expression persisted in the developing thyroid until birth, in mucous forming cells of salivary glands and in odontogenic epithelium of the mandible.</text>
</comment>
<comment type="similarity">
    <text evidence="5">Belongs to the NK-2 homeobox family.</text>
</comment>
<gene>
    <name type="primary">Nkx2-3</name>
    <name type="synonym">Nkx-2.3</name>
    <name type="synonym">Nkx2c</name>
</gene>
<protein>
    <recommendedName>
        <fullName>Homeobox protein Nkx-2.3</fullName>
    </recommendedName>
    <alternativeName>
        <fullName>Homeobox protein NK-2 homolog 3</fullName>
    </alternativeName>
    <alternativeName>
        <fullName>Homeobox protein NK-2 homolog C</fullName>
    </alternativeName>
    <alternativeName>
        <fullName>Nkx2-C</fullName>
    </alternativeName>
</protein>
<organism>
    <name type="scientific">Mus musculus</name>
    <name type="common">Mouse</name>
    <dbReference type="NCBI Taxonomy" id="10090"/>
    <lineage>
        <taxon>Eukaryota</taxon>
        <taxon>Metazoa</taxon>
        <taxon>Chordata</taxon>
        <taxon>Craniata</taxon>
        <taxon>Vertebrata</taxon>
        <taxon>Euteleostomi</taxon>
        <taxon>Mammalia</taxon>
        <taxon>Eutheria</taxon>
        <taxon>Euarchontoglires</taxon>
        <taxon>Glires</taxon>
        <taxon>Rodentia</taxon>
        <taxon>Myomorpha</taxon>
        <taxon>Muroidea</taxon>
        <taxon>Muridae</taxon>
        <taxon>Murinae</taxon>
        <taxon>Mus</taxon>
        <taxon>Mus</taxon>
    </lineage>
</organism>
<accession>P97334</accession>
<accession>Q9QZ60</accession>
<accession>Q9WV67</accession>